<name>DUSKY_IPOPU</name>
<accession>Q53UH5</accession>
<organism>
    <name type="scientific">Ipomoea purpurea</name>
    <name type="common">Common morning glory</name>
    <name type="synonym">Pharbitis purpurea</name>
    <dbReference type="NCBI Taxonomy" id="4121"/>
    <lineage>
        <taxon>Eukaryota</taxon>
        <taxon>Viridiplantae</taxon>
        <taxon>Streptophyta</taxon>
        <taxon>Embryophyta</taxon>
        <taxon>Tracheophyta</taxon>
        <taxon>Spermatophyta</taxon>
        <taxon>Magnoliopsida</taxon>
        <taxon>eudicotyledons</taxon>
        <taxon>Gunneridae</taxon>
        <taxon>Pentapetalae</taxon>
        <taxon>asterids</taxon>
        <taxon>lamiids</taxon>
        <taxon>Solanales</taxon>
        <taxon>Convolvulaceae</taxon>
        <taxon>Ipomoeeae</taxon>
        <taxon>Ipomoea</taxon>
    </lineage>
</organism>
<evidence type="ECO:0000250" key="1">
    <source>
        <dbReference type="UniProtKB" id="A0A0A1HA03"/>
    </source>
</evidence>
<evidence type="ECO:0000250" key="2">
    <source>
        <dbReference type="UniProtKB" id="P51094"/>
    </source>
</evidence>
<evidence type="ECO:0000269" key="3">
    <source>
    </source>
</evidence>
<evidence type="ECO:0000305" key="4"/>
<comment type="function">
    <text evidence="3">Glycosyltransferase that mediates the glucosylation of anthocyanidin 3-O-glucosides to yield anthocyanidin 3-O-sophorosides. 3-O-sophoroside derivatives are required for the color of flowers.</text>
</comment>
<comment type="catalytic activity">
    <reaction>
        <text>an anthocyanidin 3-O-beta-D-glucoside + UDP-alpha-D-glucose = an anthocyanidin 3-O-sophoroside + UDP + 2 H(+)</text>
        <dbReference type="Rhea" id="RHEA:35419"/>
        <dbReference type="ChEBI" id="CHEBI:15378"/>
        <dbReference type="ChEBI" id="CHEBI:16307"/>
        <dbReference type="ChEBI" id="CHEBI:58223"/>
        <dbReference type="ChEBI" id="CHEBI:58885"/>
        <dbReference type="ChEBI" id="CHEBI:77946"/>
        <dbReference type="EC" id="2.4.1.297"/>
    </reaction>
</comment>
<comment type="pathway">
    <text>Pigment biosynthesis; anthocyanin biosynthesis.</text>
</comment>
<comment type="similarity">
    <text evidence="4">Belongs to the UDP-glycosyltransferase family.</text>
</comment>
<gene>
    <name type="primary">3GGT</name>
</gene>
<dbReference type="EC" id="2.4.1.297"/>
<dbReference type="EMBL" id="AB192315">
    <property type="protein sequence ID" value="BAD95882.1"/>
    <property type="molecule type" value="mRNA"/>
</dbReference>
<dbReference type="SMR" id="Q53UH5"/>
<dbReference type="CAZy" id="GT1">
    <property type="family name" value="Glycosyltransferase Family 1"/>
</dbReference>
<dbReference type="KEGG" id="ag:BAD95882"/>
<dbReference type="BioCyc" id="MetaCyc:MONOMER-17863"/>
<dbReference type="UniPathway" id="UPA00009"/>
<dbReference type="GO" id="GO:0102455">
    <property type="term" value="F:anthocyanidin 3-O-glucoside 2''-O-glucosyltransferase activity"/>
    <property type="evidence" value="ECO:0007669"/>
    <property type="project" value="UniProtKB-EC"/>
</dbReference>
<dbReference type="GO" id="GO:0035251">
    <property type="term" value="F:UDP-glucosyltransferase activity"/>
    <property type="evidence" value="ECO:0007669"/>
    <property type="project" value="InterPro"/>
</dbReference>
<dbReference type="GO" id="GO:0009718">
    <property type="term" value="P:anthocyanin-containing compound biosynthetic process"/>
    <property type="evidence" value="ECO:0007669"/>
    <property type="project" value="UniProtKB-UniPathway"/>
</dbReference>
<dbReference type="CDD" id="cd03784">
    <property type="entry name" value="GT1_Gtf-like"/>
    <property type="match status" value="1"/>
</dbReference>
<dbReference type="FunFam" id="3.40.50.2000:FF:000037">
    <property type="entry name" value="Glycosyltransferase"/>
    <property type="match status" value="1"/>
</dbReference>
<dbReference type="FunFam" id="3.40.50.2000:FF:000087">
    <property type="entry name" value="Glycosyltransferase"/>
    <property type="match status" value="1"/>
</dbReference>
<dbReference type="Gene3D" id="3.40.50.2000">
    <property type="entry name" value="Glycogen Phosphorylase B"/>
    <property type="match status" value="2"/>
</dbReference>
<dbReference type="InterPro" id="IPR050481">
    <property type="entry name" value="UDP-glycosyltransf_plant"/>
</dbReference>
<dbReference type="InterPro" id="IPR002213">
    <property type="entry name" value="UDP_glucos_trans"/>
</dbReference>
<dbReference type="PANTHER" id="PTHR48049">
    <property type="entry name" value="GLYCOSYLTRANSFERASE"/>
    <property type="match status" value="1"/>
</dbReference>
<dbReference type="PANTHER" id="PTHR48049:SF34">
    <property type="entry name" value="UDP-GLYCOSYLTRANSFERASE 79B30-LIKE"/>
    <property type="match status" value="1"/>
</dbReference>
<dbReference type="Pfam" id="PF00201">
    <property type="entry name" value="UDPGT"/>
    <property type="match status" value="1"/>
</dbReference>
<dbReference type="SUPFAM" id="SSF53756">
    <property type="entry name" value="UDP-Glycosyltransferase/glycogen phosphorylase"/>
    <property type="match status" value="1"/>
</dbReference>
<protein>
    <recommendedName>
        <fullName>Anthocyanidin 3-O-glucoside 2''-O-glucosyltransferase</fullName>
        <ecNumber>2.4.1.297</ecNumber>
    </recommendedName>
    <alternativeName>
        <fullName>3-O-glucoside-2''-O-glucosyltransferase</fullName>
        <shortName>Ip3GGT</shortName>
    </alternativeName>
    <alternativeName>
        <fullName>Protein dusky</fullName>
        <shortName>Dy</shortName>
    </alternativeName>
</protein>
<proteinExistence type="evidence at transcript level"/>
<keyword id="KW-0328">Glycosyltransferase</keyword>
<keyword id="KW-0808">Transferase</keyword>
<feature type="chain" id="PRO_0000422562" description="Anthocyanidin 3-O-glucoside 2''-O-glucosyltransferase">
    <location>
        <begin position="1"/>
        <end position="459"/>
    </location>
</feature>
<feature type="active site" description="Proton acceptor" evidence="1">
    <location>
        <position position="20"/>
    </location>
</feature>
<feature type="active site" description="Charge relay" evidence="1">
    <location>
        <position position="117"/>
    </location>
</feature>
<feature type="binding site" evidence="2">
    <location>
        <position position="20"/>
    </location>
    <ligand>
        <name>an anthocyanidin</name>
        <dbReference type="ChEBI" id="CHEBI:143576"/>
    </ligand>
</feature>
<feature type="binding site" evidence="1">
    <location>
        <position position="138"/>
    </location>
    <ligand>
        <name>UDP-alpha-D-glucose</name>
        <dbReference type="ChEBI" id="CHEBI:58885"/>
    </ligand>
</feature>
<feature type="binding site" evidence="1">
    <location>
        <position position="335"/>
    </location>
    <ligand>
        <name>UDP-alpha-D-glucose</name>
        <dbReference type="ChEBI" id="CHEBI:58885"/>
    </ligand>
</feature>
<feature type="binding site" evidence="1">
    <location>
        <position position="337"/>
    </location>
    <ligand>
        <name>UDP-alpha-D-glucose</name>
        <dbReference type="ChEBI" id="CHEBI:58885"/>
    </ligand>
</feature>
<feature type="binding site" evidence="1">
    <location>
        <position position="352"/>
    </location>
    <ligand>
        <name>UDP-alpha-D-glucose</name>
        <dbReference type="ChEBI" id="CHEBI:58885"/>
    </ligand>
</feature>
<feature type="binding site" evidence="1">
    <location>
        <position position="355"/>
    </location>
    <ligand>
        <name>UDP-alpha-D-glucose</name>
        <dbReference type="ChEBI" id="CHEBI:58885"/>
    </ligand>
</feature>
<feature type="binding site" evidence="1">
    <location>
        <position position="357"/>
    </location>
    <ligand>
        <name>UDP-alpha-D-glucose</name>
        <dbReference type="ChEBI" id="CHEBI:58885"/>
    </ligand>
</feature>
<feature type="binding site" evidence="1">
    <location>
        <position position="360"/>
    </location>
    <ligand>
        <name>UDP-alpha-D-glucose</name>
        <dbReference type="ChEBI" id="CHEBI:58885"/>
    </ligand>
</feature>
<feature type="binding site" evidence="2">
    <location>
        <position position="375"/>
    </location>
    <ligand>
        <name>an anthocyanidin</name>
        <dbReference type="ChEBI" id="CHEBI:143576"/>
    </ligand>
</feature>
<feature type="binding site" evidence="1">
    <location>
        <position position="376"/>
    </location>
    <ligand>
        <name>UDP-alpha-D-glucose</name>
        <dbReference type="ChEBI" id="CHEBI:58885"/>
    </ligand>
</feature>
<feature type="binding site" evidence="1">
    <location>
        <position position="377"/>
    </location>
    <ligand>
        <name>UDP-alpha-D-glucose</name>
        <dbReference type="ChEBI" id="CHEBI:58885"/>
    </ligand>
</feature>
<reference key="1">
    <citation type="journal article" date="2005" name="Plant J.">
        <title>Japanese morning glory dusky mutants displaying reddish-brown or purplish-gray flowers are deficient in a novel glycosylation enzyme for anthocyanin biosynthesis, UDP-glucose:anthocyanidin 3-O-glucoside-2''-O-glucosyltransferase, due to 4-bp insertions in the gene.</title>
        <authorList>
            <person name="Morita Y."/>
            <person name="Hoshino A."/>
            <person name="Kikuchi Y."/>
            <person name="Okuhara H."/>
            <person name="Ono E."/>
            <person name="Tanaka Y."/>
            <person name="Fukui Y."/>
            <person name="Saito N."/>
            <person name="Nitasaka E."/>
            <person name="Noguchi H."/>
            <person name="Iida S."/>
        </authorList>
    </citation>
    <scope>NUCLEOTIDE SEQUENCE [MRNA]</scope>
    <scope>FUNCTION</scope>
    <source>
        <strain>YO/FP-39</strain>
    </source>
</reference>
<sequence length="459" mass="51204">MGSQATTYHMAMYPWFGVGHLTGFFRLANKLAGKGHRISFLIPKNTQSKLESFNLHPHLISFVPIVVPSIPGLPPGAETTSDVPFPSTHLLMEAMDKTQNDIEIILKDLKVDVVFYDFTHWLPSLARKIGIKSVFYSTISPLMHGYALSPERRVVGKQLTEADMMKAPASFPDPSIKLHAHEARGFTARTVMKFGGDITFFDRIFTAVSESDGLAYSTCREIEGQFCDYIETQFQKPVLLAGPALPVPSKSTMEQKWSDWLGKFKEGSVIYCAFGSECTLRKDKFQELLWGLELTGMPFFAALKPPFETESVEAAIPEELKEKIQGRGIVHGEWVQQQLFLQHPSVGCFVSHCGWASLSEALVNDCQIVLLPQVGDQIINARIMSVSLKVGVEVEKGEEDGVFSRESVCKAVKAVMDEKSEIGREVRGNHDKLRGFLMNADLDSKYMDSFNQKLQDLLG</sequence>